<reference key="1">
    <citation type="journal article" date="2008" name="Foodborne Pathog. Dis.">
        <title>The complete genome sequence and analysis of the human pathogen Campylobacter lari.</title>
        <authorList>
            <person name="Miller W.G."/>
            <person name="Wang G."/>
            <person name="Binnewies T.T."/>
            <person name="Parker C.T."/>
        </authorList>
    </citation>
    <scope>NUCLEOTIDE SEQUENCE [LARGE SCALE GENOMIC DNA]</scope>
    <source>
        <strain>RM2100 / D67 / ATCC BAA-1060</strain>
    </source>
</reference>
<gene>
    <name evidence="1" type="primary">serS</name>
    <name type="ordered locus">Cla_0533</name>
</gene>
<name>SYS_CAMLR</name>
<keyword id="KW-0030">Aminoacyl-tRNA synthetase</keyword>
<keyword id="KW-0067">ATP-binding</keyword>
<keyword id="KW-0963">Cytoplasm</keyword>
<keyword id="KW-0436">Ligase</keyword>
<keyword id="KW-0547">Nucleotide-binding</keyword>
<keyword id="KW-0648">Protein biosynthesis</keyword>
<keyword id="KW-1185">Reference proteome</keyword>
<protein>
    <recommendedName>
        <fullName evidence="1">Serine--tRNA ligase</fullName>
        <ecNumber evidence="1">6.1.1.11</ecNumber>
    </recommendedName>
    <alternativeName>
        <fullName evidence="1">Seryl-tRNA synthetase</fullName>
        <shortName evidence="1">SerRS</shortName>
    </alternativeName>
    <alternativeName>
        <fullName evidence="1">Seryl-tRNA(Ser/Sec) synthetase</fullName>
    </alternativeName>
</protein>
<proteinExistence type="inferred from homology"/>
<dbReference type="EC" id="6.1.1.11" evidence="1"/>
<dbReference type="EMBL" id="CP000932">
    <property type="protein sequence ID" value="ACM63867.1"/>
    <property type="molecule type" value="Genomic_DNA"/>
</dbReference>
<dbReference type="RefSeq" id="WP_012661250.1">
    <property type="nucleotide sequence ID" value="NC_012039.1"/>
</dbReference>
<dbReference type="SMR" id="B9KFN2"/>
<dbReference type="STRING" id="306263.Cla_0533"/>
<dbReference type="KEGG" id="cla:CLA_0533"/>
<dbReference type="PATRIC" id="fig|306263.5.peg.516"/>
<dbReference type="eggNOG" id="COG0172">
    <property type="taxonomic scope" value="Bacteria"/>
</dbReference>
<dbReference type="HOGENOM" id="CLU_023797_1_1_7"/>
<dbReference type="UniPathway" id="UPA00906">
    <property type="reaction ID" value="UER00895"/>
</dbReference>
<dbReference type="Proteomes" id="UP000007727">
    <property type="component" value="Chromosome"/>
</dbReference>
<dbReference type="GO" id="GO:0005737">
    <property type="term" value="C:cytoplasm"/>
    <property type="evidence" value="ECO:0007669"/>
    <property type="project" value="UniProtKB-SubCell"/>
</dbReference>
<dbReference type="GO" id="GO:0005524">
    <property type="term" value="F:ATP binding"/>
    <property type="evidence" value="ECO:0007669"/>
    <property type="project" value="UniProtKB-UniRule"/>
</dbReference>
<dbReference type="GO" id="GO:0004828">
    <property type="term" value="F:serine-tRNA ligase activity"/>
    <property type="evidence" value="ECO:0007669"/>
    <property type="project" value="UniProtKB-UniRule"/>
</dbReference>
<dbReference type="GO" id="GO:0016260">
    <property type="term" value="P:selenocysteine biosynthetic process"/>
    <property type="evidence" value="ECO:0007669"/>
    <property type="project" value="UniProtKB-UniRule"/>
</dbReference>
<dbReference type="GO" id="GO:0006434">
    <property type="term" value="P:seryl-tRNA aminoacylation"/>
    <property type="evidence" value="ECO:0007669"/>
    <property type="project" value="UniProtKB-UniRule"/>
</dbReference>
<dbReference type="CDD" id="cd00770">
    <property type="entry name" value="SerRS_core"/>
    <property type="match status" value="1"/>
</dbReference>
<dbReference type="Gene3D" id="3.30.930.10">
    <property type="entry name" value="Bira Bifunctional Protein, Domain 2"/>
    <property type="match status" value="1"/>
</dbReference>
<dbReference type="Gene3D" id="1.10.287.40">
    <property type="entry name" value="Serine-tRNA synthetase, tRNA binding domain"/>
    <property type="match status" value="1"/>
</dbReference>
<dbReference type="HAMAP" id="MF_00176">
    <property type="entry name" value="Ser_tRNA_synth_type1"/>
    <property type="match status" value="1"/>
</dbReference>
<dbReference type="InterPro" id="IPR002314">
    <property type="entry name" value="aa-tRNA-synt_IIb"/>
</dbReference>
<dbReference type="InterPro" id="IPR006195">
    <property type="entry name" value="aa-tRNA-synth_II"/>
</dbReference>
<dbReference type="InterPro" id="IPR045864">
    <property type="entry name" value="aa-tRNA-synth_II/BPL/LPL"/>
</dbReference>
<dbReference type="InterPro" id="IPR002317">
    <property type="entry name" value="Ser-tRNA-ligase_type_1"/>
</dbReference>
<dbReference type="InterPro" id="IPR015866">
    <property type="entry name" value="Ser-tRNA-synth_1_N"/>
</dbReference>
<dbReference type="InterPro" id="IPR042103">
    <property type="entry name" value="SerRS_1_N_sf"/>
</dbReference>
<dbReference type="InterPro" id="IPR033729">
    <property type="entry name" value="SerRS_core"/>
</dbReference>
<dbReference type="InterPro" id="IPR010978">
    <property type="entry name" value="tRNA-bd_arm"/>
</dbReference>
<dbReference type="NCBIfam" id="TIGR00414">
    <property type="entry name" value="serS"/>
    <property type="match status" value="1"/>
</dbReference>
<dbReference type="PANTHER" id="PTHR43697:SF1">
    <property type="entry name" value="SERINE--TRNA LIGASE"/>
    <property type="match status" value="1"/>
</dbReference>
<dbReference type="PANTHER" id="PTHR43697">
    <property type="entry name" value="SERYL-TRNA SYNTHETASE"/>
    <property type="match status" value="1"/>
</dbReference>
<dbReference type="Pfam" id="PF02403">
    <property type="entry name" value="Seryl_tRNA_N"/>
    <property type="match status" value="1"/>
</dbReference>
<dbReference type="Pfam" id="PF00587">
    <property type="entry name" value="tRNA-synt_2b"/>
    <property type="match status" value="1"/>
</dbReference>
<dbReference type="PIRSF" id="PIRSF001529">
    <property type="entry name" value="Ser-tRNA-synth_IIa"/>
    <property type="match status" value="1"/>
</dbReference>
<dbReference type="PRINTS" id="PR00981">
    <property type="entry name" value="TRNASYNTHSER"/>
</dbReference>
<dbReference type="SUPFAM" id="SSF55681">
    <property type="entry name" value="Class II aaRS and biotin synthetases"/>
    <property type="match status" value="1"/>
</dbReference>
<dbReference type="SUPFAM" id="SSF46589">
    <property type="entry name" value="tRNA-binding arm"/>
    <property type="match status" value="1"/>
</dbReference>
<dbReference type="PROSITE" id="PS50862">
    <property type="entry name" value="AA_TRNA_LIGASE_II"/>
    <property type="match status" value="1"/>
</dbReference>
<sequence length="411" mass="46826">MLDLKLLQNNFDEIAQKLKAKKVDENLLKELSDLFINLKKEKALLEEFQAFQNKFSKELATAQDKESLKAQLSQNKEKINAQSKIVNELEEKLGQIALAIPNTPDDCVPFGEDEDENVELKKVLTPPSFDFEIKEHHDLGEKLNWLDFTRGVKISQSRFCVLKNEGALLSRALVNYMIDFNRSRGFELVNVPFLVNGATMYGTGQLPKFKDDMYKVENDDLYLISTSEIPVTNLYSNEILTQEELPLKMTCYSACFRQEAGSAGKDTRGIIRQHQFEKVELVSICKPDQSELMFEEMLNCASDLLSSLGLAHRHLMLCTGDLGFSAAKTVDLEVWLPSQNKYREISSVSNCKDFQARRAKIRFKNDKGKNELVHTLNGSSLAVGRTLVAIMENYQEKDGNIRIPDVLRKYF</sequence>
<feature type="chain" id="PRO_1000123878" description="Serine--tRNA ligase">
    <location>
        <begin position="1"/>
        <end position="411"/>
    </location>
</feature>
<feature type="binding site" evidence="1">
    <location>
        <begin position="226"/>
        <end position="228"/>
    </location>
    <ligand>
        <name>L-serine</name>
        <dbReference type="ChEBI" id="CHEBI:33384"/>
    </ligand>
</feature>
<feature type="binding site" evidence="1">
    <location>
        <begin position="257"/>
        <end position="259"/>
    </location>
    <ligand>
        <name>ATP</name>
        <dbReference type="ChEBI" id="CHEBI:30616"/>
    </ligand>
</feature>
<feature type="binding site" evidence="1">
    <location>
        <position position="280"/>
    </location>
    <ligand>
        <name>L-serine</name>
        <dbReference type="ChEBI" id="CHEBI:33384"/>
    </ligand>
</feature>
<feature type="binding site" evidence="1">
    <location>
        <begin position="344"/>
        <end position="347"/>
    </location>
    <ligand>
        <name>ATP</name>
        <dbReference type="ChEBI" id="CHEBI:30616"/>
    </ligand>
</feature>
<feature type="binding site" evidence="1">
    <location>
        <position position="379"/>
    </location>
    <ligand>
        <name>L-serine</name>
        <dbReference type="ChEBI" id="CHEBI:33384"/>
    </ligand>
</feature>
<evidence type="ECO:0000255" key="1">
    <source>
        <dbReference type="HAMAP-Rule" id="MF_00176"/>
    </source>
</evidence>
<comment type="function">
    <text evidence="1">Catalyzes the attachment of serine to tRNA(Ser). Is also able to aminoacylate tRNA(Sec) with serine, to form the misacylated tRNA L-seryl-tRNA(Sec), which will be further converted into selenocysteinyl-tRNA(Sec).</text>
</comment>
<comment type="catalytic activity">
    <reaction evidence="1">
        <text>tRNA(Ser) + L-serine + ATP = L-seryl-tRNA(Ser) + AMP + diphosphate + H(+)</text>
        <dbReference type="Rhea" id="RHEA:12292"/>
        <dbReference type="Rhea" id="RHEA-COMP:9669"/>
        <dbReference type="Rhea" id="RHEA-COMP:9703"/>
        <dbReference type="ChEBI" id="CHEBI:15378"/>
        <dbReference type="ChEBI" id="CHEBI:30616"/>
        <dbReference type="ChEBI" id="CHEBI:33019"/>
        <dbReference type="ChEBI" id="CHEBI:33384"/>
        <dbReference type="ChEBI" id="CHEBI:78442"/>
        <dbReference type="ChEBI" id="CHEBI:78533"/>
        <dbReference type="ChEBI" id="CHEBI:456215"/>
        <dbReference type="EC" id="6.1.1.11"/>
    </reaction>
</comment>
<comment type="catalytic activity">
    <reaction evidence="1">
        <text>tRNA(Sec) + L-serine + ATP = L-seryl-tRNA(Sec) + AMP + diphosphate + H(+)</text>
        <dbReference type="Rhea" id="RHEA:42580"/>
        <dbReference type="Rhea" id="RHEA-COMP:9742"/>
        <dbReference type="Rhea" id="RHEA-COMP:10128"/>
        <dbReference type="ChEBI" id="CHEBI:15378"/>
        <dbReference type="ChEBI" id="CHEBI:30616"/>
        <dbReference type="ChEBI" id="CHEBI:33019"/>
        <dbReference type="ChEBI" id="CHEBI:33384"/>
        <dbReference type="ChEBI" id="CHEBI:78442"/>
        <dbReference type="ChEBI" id="CHEBI:78533"/>
        <dbReference type="ChEBI" id="CHEBI:456215"/>
        <dbReference type="EC" id="6.1.1.11"/>
    </reaction>
</comment>
<comment type="pathway">
    <text evidence="1">Aminoacyl-tRNA biosynthesis; selenocysteinyl-tRNA(Sec) biosynthesis; L-seryl-tRNA(Sec) from L-serine and tRNA(Sec): step 1/1.</text>
</comment>
<comment type="subunit">
    <text evidence="1">Homodimer. The tRNA molecule binds across the dimer.</text>
</comment>
<comment type="subcellular location">
    <subcellularLocation>
        <location evidence="1">Cytoplasm</location>
    </subcellularLocation>
</comment>
<comment type="domain">
    <text evidence="1">Consists of two distinct domains, a catalytic core and a N-terminal extension that is involved in tRNA binding.</text>
</comment>
<comment type="similarity">
    <text evidence="1">Belongs to the class-II aminoacyl-tRNA synthetase family. Type-1 seryl-tRNA synthetase subfamily.</text>
</comment>
<organism>
    <name type="scientific">Campylobacter lari (strain RM2100 / D67 / ATCC BAA-1060)</name>
    <dbReference type="NCBI Taxonomy" id="306263"/>
    <lineage>
        <taxon>Bacteria</taxon>
        <taxon>Pseudomonadati</taxon>
        <taxon>Campylobacterota</taxon>
        <taxon>Epsilonproteobacteria</taxon>
        <taxon>Campylobacterales</taxon>
        <taxon>Campylobacteraceae</taxon>
        <taxon>Campylobacter</taxon>
    </lineage>
</organism>
<accession>B9KFN2</accession>